<gene>
    <name evidence="1" type="primary">hisA</name>
    <name type="ordered locus">SARI_00808</name>
</gene>
<feature type="chain" id="PRO_1000084109" description="1-(5-phosphoribosyl)-5-[(5-phosphoribosylamino)methylideneamino] imidazole-4-carboxamide isomerase">
    <location>
        <begin position="1"/>
        <end position="245"/>
    </location>
</feature>
<feature type="active site" description="Proton acceptor" evidence="1">
    <location>
        <position position="7"/>
    </location>
</feature>
<feature type="active site" description="Proton donor" evidence="1">
    <location>
        <position position="129"/>
    </location>
</feature>
<accession>A9ML12</accession>
<dbReference type="EC" id="5.3.1.16" evidence="1"/>
<dbReference type="EMBL" id="CP000880">
    <property type="protein sequence ID" value="ABX20728.1"/>
    <property type="molecule type" value="Genomic_DNA"/>
</dbReference>
<dbReference type="SMR" id="A9ML12"/>
<dbReference type="STRING" id="41514.SARI_00808"/>
<dbReference type="KEGG" id="ses:SARI_00808"/>
<dbReference type="HOGENOM" id="CLU_048577_1_2_6"/>
<dbReference type="UniPathway" id="UPA00031">
    <property type="reaction ID" value="UER00009"/>
</dbReference>
<dbReference type="Proteomes" id="UP000002084">
    <property type="component" value="Chromosome"/>
</dbReference>
<dbReference type="GO" id="GO:0005737">
    <property type="term" value="C:cytoplasm"/>
    <property type="evidence" value="ECO:0007669"/>
    <property type="project" value="UniProtKB-SubCell"/>
</dbReference>
<dbReference type="GO" id="GO:0003949">
    <property type="term" value="F:1-(5-phosphoribosyl)-5-[(5-phosphoribosylamino)methylideneamino]imidazole-4-carboxamide isomerase activity"/>
    <property type="evidence" value="ECO:0007669"/>
    <property type="project" value="UniProtKB-UniRule"/>
</dbReference>
<dbReference type="GO" id="GO:0000105">
    <property type="term" value="P:L-histidine biosynthetic process"/>
    <property type="evidence" value="ECO:0007669"/>
    <property type="project" value="UniProtKB-UniRule"/>
</dbReference>
<dbReference type="GO" id="GO:0000162">
    <property type="term" value="P:L-tryptophan biosynthetic process"/>
    <property type="evidence" value="ECO:0007669"/>
    <property type="project" value="TreeGrafter"/>
</dbReference>
<dbReference type="CDD" id="cd04732">
    <property type="entry name" value="HisA"/>
    <property type="match status" value="1"/>
</dbReference>
<dbReference type="FunFam" id="3.20.20.70:FF:000009">
    <property type="entry name" value="1-(5-phosphoribosyl)-5-[(5-phosphoribosylamino)methylideneamino] imidazole-4-carboxamide isomerase"/>
    <property type="match status" value="1"/>
</dbReference>
<dbReference type="Gene3D" id="3.20.20.70">
    <property type="entry name" value="Aldolase class I"/>
    <property type="match status" value="1"/>
</dbReference>
<dbReference type="HAMAP" id="MF_01014">
    <property type="entry name" value="HisA"/>
    <property type="match status" value="1"/>
</dbReference>
<dbReference type="InterPro" id="IPR013785">
    <property type="entry name" value="Aldolase_TIM"/>
</dbReference>
<dbReference type="InterPro" id="IPR006062">
    <property type="entry name" value="His_biosynth"/>
</dbReference>
<dbReference type="InterPro" id="IPR006063">
    <property type="entry name" value="HisA_bact_arch"/>
</dbReference>
<dbReference type="InterPro" id="IPR044524">
    <property type="entry name" value="Isoase_HisA-like"/>
</dbReference>
<dbReference type="InterPro" id="IPR023016">
    <property type="entry name" value="Isoase_HisA-like_bact"/>
</dbReference>
<dbReference type="InterPro" id="IPR011060">
    <property type="entry name" value="RibuloseP-bd_barrel"/>
</dbReference>
<dbReference type="NCBIfam" id="TIGR00007">
    <property type="entry name" value="1-(5-phosphoribosyl)-5-[(5-phosphoribosylamino)methylideneamino]imidazole-4-carboxamide isomerase"/>
    <property type="match status" value="1"/>
</dbReference>
<dbReference type="PANTHER" id="PTHR43090">
    <property type="entry name" value="1-(5-PHOSPHORIBOSYL)-5-[(5-PHOSPHORIBOSYLAMINO)METHYLIDENEAMINO] IMIDAZOLE-4-CARBOXAMIDE ISOMERASE"/>
    <property type="match status" value="1"/>
</dbReference>
<dbReference type="PANTHER" id="PTHR43090:SF2">
    <property type="entry name" value="1-(5-PHOSPHORIBOSYL)-5-[(5-PHOSPHORIBOSYLAMINO)METHYLIDENEAMINO] IMIDAZOLE-4-CARBOXAMIDE ISOMERASE"/>
    <property type="match status" value="1"/>
</dbReference>
<dbReference type="Pfam" id="PF00977">
    <property type="entry name" value="His_biosynth"/>
    <property type="match status" value="1"/>
</dbReference>
<dbReference type="SUPFAM" id="SSF51366">
    <property type="entry name" value="Ribulose-phoshate binding barrel"/>
    <property type="match status" value="1"/>
</dbReference>
<comment type="catalytic activity">
    <reaction evidence="1">
        <text>1-(5-phospho-beta-D-ribosyl)-5-[(5-phospho-beta-D-ribosylamino)methylideneamino]imidazole-4-carboxamide = 5-[(5-phospho-1-deoxy-D-ribulos-1-ylimino)methylamino]-1-(5-phospho-beta-D-ribosyl)imidazole-4-carboxamide</text>
        <dbReference type="Rhea" id="RHEA:15469"/>
        <dbReference type="ChEBI" id="CHEBI:58435"/>
        <dbReference type="ChEBI" id="CHEBI:58525"/>
        <dbReference type="EC" id="5.3.1.16"/>
    </reaction>
</comment>
<comment type="pathway">
    <text evidence="1">Amino-acid biosynthesis; L-histidine biosynthesis; L-histidine from 5-phospho-alpha-D-ribose 1-diphosphate: step 4/9.</text>
</comment>
<comment type="subcellular location">
    <subcellularLocation>
        <location evidence="1">Cytoplasm</location>
    </subcellularLocation>
</comment>
<comment type="similarity">
    <text evidence="1">Belongs to the HisA/HisF family.</text>
</comment>
<organism>
    <name type="scientific">Salmonella arizonae (strain ATCC BAA-731 / CDC346-86 / RSK2980)</name>
    <dbReference type="NCBI Taxonomy" id="41514"/>
    <lineage>
        <taxon>Bacteria</taxon>
        <taxon>Pseudomonadati</taxon>
        <taxon>Pseudomonadota</taxon>
        <taxon>Gammaproteobacteria</taxon>
        <taxon>Enterobacterales</taxon>
        <taxon>Enterobacteriaceae</taxon>
        <taxon>Salmonella</taxon>
    </lineage>
</organism>
<keyword id="KW-0028">Amino-acid biosynthesis</keyword>
<keyword id="KW-0963">Cytoplasm</keyword>
<keyword id="KW-0368">Histidine biosynthesis</keyword>
<keyword id="KW-0413">Isomerase</keyword>
<keyword id="KW-1185">Reference proteome</keyword>
<protein>
    <recommendedName>
        <fullName evidence="1">1-(5-phosphoribosyl)-5-[(5-phosphoribosylamino)methylideneamino] imidazole-4-carboxamide isomerase</fullName>
        <ecNumber evidence="1">5.3.1.16</ecNumber>
    </recommendedName>
    <alternativeName>
        <fullName evidence="1">Phosphoribosylformimino-5-aminoimidazole carboxamide ribotide isomerase</fullName>
    </alternativeName>
</protein>
<sequence length="245" mass="26157">MIIPALDLIDGVVVRLHQGDYARQRDYGNDPLPRLQDYVAQGAEVLHLVDLTGAKDPANRQISLIKTLVAGVNVPVQIGGGVRTEEDVAALLEAGVARVVVGSTAVKSPEVVKGWFERFGAQALVLALDVRIDEHGNKQVAVSGWQENSGISLEQLVETYLPVGLKHVLCTDISRDGTLAGSNVSLYQEVCARYPQIAFQSSGGIGDIDDIAALRGTGVHGVIVGRALLEGKFTVKEAIQCWQNA</sequence>
<proteinExistence type="inferred from homology"/>
<name>HIS4_SALAR</name>
<evidence type="ECO:0000255" key="1">
    <source>
        <dbReference type="HAMAP-Rule" id="MF_01014"/>
    </source>
</evidence>
<reference key="1">
    <citation type="submission" date="2007-11" db="EMBL/GenBank/DDBJ databases">
        <authorList>
            <consortium name="The Salmonella enterica serovar Arizonae Genome Sequencing Project"/>
            <person name="McClelland M."/>
            <person name="Sanderson E.K."/>
            <person name="Porwollik S."/>
            <person name="Spieth J."/>
            <person name="Clifton W.S."/>
            <person name="Fulton R."/>
            <person name="Chunyan W."/>
            <person name="Wollam A."/>
            <person name="Shah N."/>
            <person name="Pepin K."/>
            <person name="Bhonagiri V."/>
            <person name="Nash W."/>
            <person name="Johnson M."/>
            <person name="Thiruvilangam P."/>
            <person name="Wilson R."/>
        </authorList>
    </citation>
    <scope>NUCLEOTIDE SEQUENCE [LARGE SCALE GENOMIC DNA]</scope>
    <source>
        <strain>ATCC BAA-731 / CDC346-86 / RSK2980</strain>
    </source>
</reference>